<keyword id="KW-0067">ATP-binding</keyword>
<keyword id="KW-0131">Cell cycle</keyword>
<keyword id="KW-0158">Chromosome</keyword>
<keyword id="KW-0227">DNA damage</keyword>
<keyword id="KW-0547">Nucleotide-binding</keyword>
<keyword id="KW-0539">Nucleus</keyword>
<keyword id="KW-0597">Phosphoprotein</keyword>
<sequence>MNQVTDWVDPSFDDFLECRDISTITATSLGVNNSSHRRKNGPSTLESSKFPVRKRGNLSSLEQIYSLENSKESLSENEPWVDKYKPETQHELAVHKKKIEEVETWLKAQVLERQPKQGGSILLITGPPGCGKTTTIKVLSKEHGIQVQEWINPVLPDFQKDDFREIFNTESSFHMFPYQSQIAVFKEFLLRATKYNKLQMLGDDLRTDKKIILVEDLPNQFYRDSHTLHEVLRKYVRIGRCPLIFVISDSLSGDNNQRLLFPKEIQEECSISNISFNPVAPTIMMKFLNRIVTIEANKNGGKITVPDKTSLELLCQGCSGDIRSAINSLQFSSSKGENNLWPRKKGMSLKSDAVLSKSKRRKKPDRVFENQEVQAIGGKDVSLFLFRALGKILYCKRASLTELDSPRLPSHLSEYERDTLLVEPEEVVEMSHMPGDLFNLYLHQNYIDFFMDIDDIVRASEFLSFADILSGDWNTCSLLREYSTSIATRGVIHSNKARGYAHCQGGGSSFRPLHKPQWFLIYKKYRENCLAAKALFPDFCLPALCLQTQLLPYLALLTIPMRNQAQISFIQDIGRLPLKRHFGRLKMEALTDREHGMIDPDSGDEAQLNGRHSTEESLGEPTQASAPETWSLPLSQNSASELPASQPQPFSAQGDMEENIIIEDYESDGT</sequence>
<dbReference type="EMBL" id="AF106067">
    <property type="protein sequence ID" value="AAD42177.1"/>
    <property type="molecule type" value="mRNA"/>
</dbReference>
<dbReference type="SMR" id="Q9XT62"/>
<dbReference type="IntAct" id="Q9XT62">
    <property type="interactions" value="3"/>
</dbReference>
<dbReference type="MINT" id="Q9XT62"/>
<dbReference type="iPTMnet" id="Q9XT62"/>
<dbReference type="GO" id="GO:0005634">
    <property type="term" value="C:nucleus"/>
    <property type="evidence" value="ECO:0007669"/>
    <property type="project" value="UniProtKB-SubCell"/>
</dbReference>
<dbReference type="GO" id="GO:0031389">
    <property type="term" value="C:Rad17 RFC-like complex"/>
    <property type="evidence" value="ECO:0007669"/>
    <property type="project" value="InterPro"/>
</dbReference>
<dbReference type="GO" id="GO:0035861">
    <property type="term" value="C:site of double-strand break"/>
    <property type="evidence" value="ECO:0000250"/>
    <property type="project" value="UniProtKB"/>
</dbReference>
<dbReference type="GO" id="GO:0005524">
    <property type="term" value="F:ATP binding"/>
    <property type="evidence" value="ECO:0007669"/>
    <property type="project" value="UniProtKB-KW"/>
</dbReference>
<dbReference type="GO" id="GO:0003682">
    <property type="term" value="F:chromatin binding"/>
    <property type="evidence" value="ECO:0007669"/>
    <property type="project" value="TreeGrafter"/>
</dbReference>
<dbReference type="GO" id="GO:0140463">
    <property type="term" value="F:chromatin-protein adaptor activity"/>
    <property type="evidence" value="ECO:0000250"/>
    <property type="project" value="UniProtKB"/>
</dbReference>
<dbReference type="GO" id="GO:0003689">
    <property type="term" value="F:DNA clamp loader activity"/>
    <property type="evidence" value="ECO:0007669"/>
    <property type="project" value="InterPro"/>
</dbReference>
<dbReference type="GO" id="GO:0000077">
    <property type="term" value="P:DNA damage checkpoint signaling"/>
    <property type="evidence" value="ECO:0007669"/>
    <property type="project" value="InterPro"/>
</dbReference>
<dbReference type="GO" id="GO:0006281">
    <property type="term" value="P:DNA repair"/>
    <property type="evidence" value="ECO:0007669"/>
    <property type="project" value="InterPro"/>
</dbReference>
<dbReference type="GO" id="GO:0033314">
    <property type="term" value="P:mitotic DNA replication checkpoint signaling"/>
    <property type="evidence" value="ECO:0007669"/>
    <property type="project" value="TreeGrafter"/>
</dbReference>
<dbReference type="GO" id="GO:1990166">
    <property type="term" value="P:protein localization to site of double-strand break"/>
    <property type="evidence" value="ECO:0000250"/>
    <property type="project" value="UniProtKB"/>
</dbReference>
<dbReference type="CDD" id="cd18139">
    <property type="entry name" value="HLD_clamp_RarA"/>
    <property type="match status" value="1"/>
</dbReference>
<dbReference type="FunFam" id="3.40.50.300:FF:000714">
    <property type="entry name" value="cell cycle checkpoint protein RAD17 isoform X1"/>
    <property type="match status" value="1"/>
</dbReference>
<dbReference type="Gene3D" id="3.40.50.300">
    <property type="entry name" value="P-loop containing nucleotide triphosphate hydrolases"/>
    <property type="match status" value="1"/>
</dbReference>
<dbReference type="InterPro" id="IPR004582">
    <property type="entry name" value="Checkpoint_prot_Rad17_Rad24"/>
</dbReference>
<dbReference type="InterPro" id="IPR027417">
    <property type="entry name" value="P-loop_NTPase"/>
</dbReference>
<dbReference type="InterPro" id="IPR018324">
    <property type="entry name" value="Rad17/Rad24_fun/met"/>
</dbReference>
<dbReference type="NCBIfam" id="TIGR00602">
    <property type="entry name" value="rad24"/>
    <property type="match status" value="1"/>
</dbReference>
<dbReference type="PANTHER" id="PTHR12172">
    <property type="entry name" value="CELL CYCLE CHECKPOINT PROTEIN RAD17"/>
    <property type="match status" value="1"/>
</dbReference>
<dbReference type="PANTHER" id="PTHR12172:SF0">
    <property type="entry name" value="CELL CYCLE CHECKPOINT PROTEIN RAD17"/>
    <property type="match status" value="1"/>
</dbReference>
<dbReference type="Pfam" id="PF03215">
    <property type="entry name" value="Rad17"/>
    <property type="match status" value="1"/>
</dbReference>
<dbReference type="SUPFAM" id="SSF52540">
    <property type="entry name" value="P-loop containing nucleoside triphosphate hydrolases"/>
    <property type="match status" value="1"/>
</dbReference>
<reference key="1">
    <citation type="journal article" date="1999" name="Cancer Res.">
        <title>HRad17, a human homologue of the Schizosaccharomyces pombe checkpoint gene rad17, is overexpressed in colon carcinoma.</title>
        <authorList>
            <person name="Bao S."/>
            <person name="Chang M.-S."/>
            <person name="Auclair D."/>
            <person name="Sun Y."/>
            <person name="Wang Y."/>
            <person name="Wong W.-K."/>
            <person name="Zhang J."/>
            <person name="Liu Y."/>
            <person name="Qian X."/>
            <person name="Sutherland R."/>
            <person name="Magi-Galluzi C."/>
            <person name="Weisberg E."/>
            <person name="Cheng E.Y.S."/>
            <person name="Hao L."/>
            <person name="Sasaki H."/>
            <person name="Campbell M.S."/>
            <person name="Kraeft S.-K."/>
            <person name="Loda M."/>
            <person name="Lo K.-M."/>
            <person name="Chen L.B."/>
        </authorList>
    </citation>
    <scope>NUCLEOTIDE SEQUENCE [MRNA]</scope>
</reference>
<reference key="2">
    <citation type="journal article" date="2007" name="Proc. Natl. Acad. Sci. U.S.A.">
        <title>Profiling signaling polarity in chemotactic cells.</title>
        <authorList>
            <person name="Wang Y."/>
            <person name="Ding S.-J."/>
            <person name="Wang W."/>
            <person name="Jacobs J.M."/>
            <person name="Qian W.-J."/>
            <person name="Moore R.J."/>
            <person name="Yang F."/>
            <person name="Camp D.G. II"/>
            <person name="Smith R.D."/>
            <person name="Klemke R.L."/>
        </authorList>
    </citation>
    <scope>PHOSPHORYLATION [LARGE SCALE ANALYSIS] AT THR-44</scope>
    <scope>IDENTIFICATION BY MASS SPECTROMETRY</scope>
</reference>
<accession>Q9XT62</accession>
<name>RAD17_CHLAE</name>
<evidence type="ECO:0000250" key="1">
    <source>
        <dbReference type="UniProtKB" id="O75943"/>
    </source>
</evidence>
<evidence type="ECO:0000255" key="2"/>
<evidence type="ECO:0000256" key="3">
    <source>
        <dbReference type="SAM" id="MobiDB-lite"/>
    </source>
</evidence>
<evidence type="ECO:0000269" key="4">
    <source>
    </source>
</evidence>
<evidence type="ECO:0000305" key="5"/>
<proteinExistence type="evidence at protein level"/>
<organism>
    <name type="scientific">Chlorocebus aethiops</name>
    <name type="common">Green monkey</name>
    <name type="synonym">Cercopithecus aethiops</name>
    <dbReference type="NCBI Taxonomy" id="9534"/>
    <lineage>
        <taxon>Eukaryota</taxon>
        <taxon>Metazoa</taxon>
        <taxon>Chordata</taxon>
        <taxon>Craniata</taxon>
        <taxon>Vertebrata</taxon>
        <taxon>Euteleostomi</taxon>
        <taxon>Mammalia</taxon>
        <taxon>Eutheria</taxon>
        <taxon>Euarchontoglires</taxon>
        <taxon>Primates</taxon>
        <taxon>Haplorrhini</taxon>
        <taxon>Catarrhini</taxon>
        <taxon>Cercopithecidae</taxon>
        <taxon>Cercopithecinae</taxon>
        <taxon>Chlorocebus</taxon>
    </lineage>
</organism>
<gene>
    <name type="primary">RAD17</name>
</gene>
<feature type="chain" id="PRO_0000209947" description="Cell cycle checkpoint protein RAD17">
    <location>
        <begin position="1"/>
        <end position="670"/>
    </location>
</feature>
<feature type="region of interest" description="Disordered" evidence="3">
    <location>
        <begin position="31"/>
        <end position="50"/>
    </location>
</feature>
<feature type="region of interest" description="Interaction with MCM7" evidence="1">
    <location>
        <begin position="421"/>
        <end position="670"/>
    </location>
</feature>
<feature type="region of interest" description="Disordered" evidence="3">
    <location>
        <begin position="593"/>
        <end position="670"/>
    </location>
</feature>
<feature type="short sequence motif" description="RAD1-binding motif" evidence="1">
    <location>
        <begin position="6"/>
        <end position="14"/>
    </location>
</feature>
<feature type="compositionally biased region" description="Polar residues" evidence="3">
    <location>
        <begin position="620"/>
        <end position="651"/>
    </location>
</feature>
<feature type="compositionally biased region" description="Acidic residues" evidence="3">
    <location>
        <begin position="655"/>
        <end position="670"/>
    </location>
</feature>
<feature type="binding site" evidence="2">
    <location>
        <begin position="126"/>
        <end position="133"/>
    </location>
    <ligand>
        <name>ATP</name>
        <dbReference type="ChEBI" id="CHEBI:30616"/>
    </ligand>
</feature>
<feature type="modified residue" description="Phosphothreonine" evidence="4">
    <location>
        <position position="44"/>
    </location>
</feature>
<feature type="modified residue" description="Phosphoserine" evidence="1">
    <location>
        <position position="60"/>
    </location>
</feature>
<feature type="modified residue" description="Phosphoserine" evidence="1">
    <location>
        <position position="75"/>
    </location>
</feature>
<feature type="modified residue" description="Phosphoserine" evidence="1">
    <location>
        <position position="348"/>
    </location>
</feature>
<feature type="modified residue" description="Phosphothreonine" evidence="1">
    <location>
        <position position="622"/>
    </location>
</feature>
<feature type="modified residue" description="Phosphoserine" evidence="1">
    <location>
        <position position="635"/>
    </location>
</feature>
<feature type="modified residue" description="Phosphoserine" evidence="1">
    <location>
        <position position="645"/>
    </location>
</feature>
<comment type="function">
    <text evidence="1">Essential for sustained cell growth, maintenance of chromosomal stability, and ATR-dependent checkpoint activation upon DNA damage. Has a weak ATPase activity required for binding to chromatin. Participates in the recruitment of the 9-1-1 (RAD1-RAD9-HUS1) complex and RHNO1 onto chromatin, and in CHEK1 activation. Involved in homologous recombination by mediating recruitment of the MRN complex to DNA damage sites. May also serve as a sensor of DNA replication progression.</text>
</comment>
<comment type="subunit">
    <text evidence="1">Part of a DNA-binding complex containing RFC2, RFC3, RFC4 and RFC5. Interacts with RAD1 and RAD9 within the 9-1-1 (RAD1-RAD9-HUS1) complex. Interacts with RAD9B, POLE, SNU13 and MCM7. DNA damage promotes interaction with ATR or ATM and disrupts interaction with the 9-1-1 (RAD1-RAD9-HUS1) complex. Interacts (when phosphorylated) with NBN; promoting recruitment of the MRN complex to DNA damage sites.</text>
</comment>
<comment type="subcellular location">
    <subcellularLocation>
        <location evidence="1">Nucleus</location>
    </subcellularLocation>
    <subcellularLocation>
        <location evidence="1">Chromosome</location>
    </subcellularLocation>
    <text evidence="1">Phosphorylated form redistributes to discrete nuclear foci upon DNA damage. Localizes to DNA double-strand breaks (DSBs).</text>
</comment>
<comment type="PTM">
    <text evidence="1">Phosphorylated. Phosphorylation on Ser-635 and Ser-645 is cell cycle-regulated, enhanced by genotoxic stress, and required for activation of checkpoint signaling. Phosphorylation is mediated by ATR upon UV or replication arrest, whereas it may be mediated both by ATR and ATM upon ionizing radiation. Phosphorylation on both sites is required for interaction with RAD1 but dispensable for interaction with RFC3 or RFC4. Phosphorylation at Thr-622 by ATM in response to DNA damage promotes interaction with NBN and recruitment of the MRN complex to DNA damage sites.</text>
</comment>
<comment type="similarity">
    <text evidence="5">Belongs to the rad17/RAD24 family.</text>
</comment>
<protein>
    <recommendedName>
        <fullName>Cell cycle checkpoint protein RAD17</fullName>
    </recommendedName>
</protein>